<protein>
    <recommendedName>
        <fullName evidence="1">Large ribosomal subunit protein bL12</fullName>
    </recommendedName>
    <alternativeName>
        <fullName evidence="2">50S ribosomal protein L7/L12</fullName>
    </alternativeName>
</protein>
<reference key="1">
    <citation type="submission" date="2007-10" db="EMBL/GenBank/DDBJ databases">
        <title>Complete sequence of Shewanella pealeana ATCC 700345.</title>
        <authorList>
            <consortium name="US DOE Joint Genome Institute"/>
            <person name="Copeland A."/>
            <person name="Lucas S."/>
            <person name="Lapidus A."/>
            <person name="Barry K."/>
            <person name="Glavina del Rio T."/>
            <person name="Dalin E."/>
            <person name="Tice H."/>
            <person name="Pitluck S."/>
            <person name="Chertkov O."/>
            <person name="Brettin T."/>
            <person name="Bruce D."/>
            <person name="Detter J.C."/>
            <person name="Han C."/>
            <person name="Schmutz J."/>
            <person name="Larimer F."/>
            <person name="Land M."/>
            <person name="Hauser L."/>
            <person name="Kyrpides N."/>
            <person name="Kim E."/>
            <person name="Zhao J.-S.Z."/>
            <person name="Manno D."/>
            <person name="Hawari J."/>
            <person name="Richardson P."/>
        </authorList>
    </citation>
    <scope>NUCLEOTIDE SEQUENCE [LARGE SCALE GENOMIC DNA]</scope>
    <source>
        <strain>ATCC 700345 / ANG-SQ1</strain>
    </source>
</reference>
<comment type="function">
    <text evidence="1">Forms part of the ribosomal stalk which helps the ribosome interact with GTP-bound translation factors. Is thus essential for accurate translation.</text>
</comment>
<comment type="subunit">
    <text evidence="1">Homodimer. Part of the ribosomal stalk of the 50S ribosomal subunit. Forms a multimeric L10(L12)X complex, where L10 forms an elongated spine to which 2 to 4 L12 dimers bind in a sequential fashion. Binds GTP-bound translation factors.</text>
</comment>
<comment type="similarity">
    <text evidence="1">Belongs to the bacterial ribosomal protein bL12 family.</text>
</comment>
<name>RL7_SHEPA</name>
<evidence type="ECO:0000255" key="1">
    <source>
        <dbReference type="HAMAP-Rule" id="MF_00368"/>
    </source>
</evidence>
<evidence type="ECO:0000305" key="2"/>
<organism>
    <name type="scientific">Shewanella pealeana (strain ATCC 700345 / ANG-SQ1)</name>
    <dbReference type="NCBI Taxonomy" id="398579"/>
    <lineage>
        <taxon>Bacteria</taxon>
        <taxon>Pseudomonadati</taxon>
        <taxon>Pseudomonadota</taxon>
        <taxon>Gammaproteobacteria</taxon>
        <taxon>Alteromonadales</taxon>
        <taxon>Shewanellaceae</taxon>
        <taxon>Shewanella</taxon>
    </lineage>
</organism>
<keyword id="KW-1185">Reference proteome</keyword>
<keyword id="KW-0687">Ribonucleoprotein</keyword>
<keyword id="KW-0689">Ribosomal protein</keyword>
<gene>
    <name evidence="1" type="primary">rplL</name>
    <name type="ordered locus">Spea_0176</name>
</gene>
<proteinExistence type="inferred from homology"/>
<dbReference type="EMBL" id="CP000851">
    <property type="protein sequence ID" value="ABV85505.1"/>
    <property type="molecule type" value="Genomic_DNA"/>
</dbReference>
<dbReference type="RefSeq" id="WP_012153451.1">
    <property type="nucleotide sequence ID" value="NC_009901.1"/>
</dbReference>
<dbReference type="SMR" id="A8GYW8"/>
<dbReference type="STRING" id="398579.Spea_0176"/>
<dbReference type="KEGG" id="spl:Spea_0176"/>
<dbReference type="eggNOG" id="COG0222">
    <property type="taxonomic scope" value="Bacteria"/>
</dbReference>
<dbReference type="HOGENOM" id="CLU_086499_3_2_6"/>
<dbReference type="OrthoDB" id="9811748at2"/>
<dbReference type="Proteomes" id="UP000002608">
    <property type="component" value="Chromosome"/>
</dbReference>
<dbReference type="GO" id="GO:0022625">
    <property type="term" value="C:cytosolic large ribosomal subunit"/>
    <property type="evidence" value="ECO:0007669"/>
    <property type="project" value="TreeGrafter"/>
</dbReference>
<dbReference type="GO" id="GO:0003729">
    <property type="term" value="F:mRNA binding"/>
    <property type="evidence" value="ECO:0007669"/>
    <property type="project" value="TreeGrafter"/>
</dbReference>
<dbReference type="GO" id="GO:0003735">
    <property type="term" value="F:structural constituent of ribosome"/>
    <property type="evidence" value="ECO:0007669"/>
    <property type="project" value="InterPro"/>
</dbReference>
<dbReference type="GO" id="GO:0006412">
    <property type="term" value="P:translation"/>
    <property type="evidence" value="ECO:0007669"/>
    <property type="project" value="UniProtKB-UniRule"/>
</dbReference>
<dbReference type="CDD" id="cd00387">
    <property type="entry name" value="Ribosomal_L7_L12"/>
    <property type="match status" value="1"/>
</dbReference>
<dbReference type="FunFam" id="1.20.5.710:FF:000001">
    <property type="entry name" value="50S ribosomal protein L7/L12"/>
    <property type="match status" value="1"/>
</dbReference>
<dbReference type="FunFam" id="3.30.1390.10:FF:000001">
    <property type="entry name" value="50S ribosomal protein L7/L12"/>
    <property type="match status" value="1"/>
</dbReference>
<dbReference type="Gene3D" id="3.30.1390.10">
    <property type="match status" value="1"/>
</dbReference>
<dbReference type="Gene3D" id="1.20.5.710">
    <property type="entry name" value="Single helix bin"/>
    <property type="match status" value="1"/>
</dbReference>
<dbReference type="HAMAP" id="MF_00368">
    <property type="entry name" value="Ribosomal_bL12"/>
    <property type="match status" value="1"/>
</dbReference>
<dbReference type="InterPro" id="IPR000206">
    <property type="entry name" value="Ribosomal_bL12"/>
</dbReference>
<dbReference type="InterPro" id="IPR013823">
    <property type="entry name" value="Ribosomal_bL12_C"/>
</dbReference>
<dbReference type="InterPro" id="IPR014719">
    <property type="entry name" value="Ribosomal_bL12_C/ClpS-like"/>
</dbReference>
<dbReference type="InterPro" id="IPR008932">
    <property type="entry name" value="Ribosomal_bL12_oligo"/>
</dbReference>
<dbReference type="InterPro" id="IPR036235">
    <property type="entry name" value="Ribosomal_bL12_oligo_N_sf"/>
</dbReference>
<dbReference type="NCBIfam" id="TIGR00855">
    <property type="entry name" value="L12"/>
    <property type="match status" value="1"/>
</dbReference>
<dbReference type="PANTHER" id="PTHR45987">
    <property type="entry name" value="39S RIBOSOMAL PROTEIN L12"/>
    <property type="match status" value="1"/>
</dbReference>
<dbReference type="PANTHER" id="PTHR45987:SF4">
    <property type="entry name" value="LARGE RIBOSOMAL SUBUNIT PROTEIN BL12M"/>
    <property type="match status" value="1"/>
</dbReference>
<dbReference type="Pfam" id="PF00542">
    <property type="entry name" value="Ribosomal_L12"/>
    <property type="match status" value="1"/>
</dbReference>
<dbReference type="Pfam" id="PF16320">
    <property type="entry name" value="Ribosomal_L12_N"/>
    <property type="match status" value="1"/>
</dbReference>
<dbReference type="SUPFAM" id="SSF54736">
    <property type="entry name" value="ClpS-like"/>
    <property type="match status" value="1"/>
</dbReference>
<dbReference type="SUPFAM" id="SSF48300">
    <property type="entry name" value="Ribosomal protein L7/12, oligomerisation (N-terminal) domain"/>
    <property type="match status" value="1"/>
</dbReference>
<sequence>MSITKDQILEALAAMSVMEVVELIEAMEEKFGVSAAAAVVSGGSDAAAAEEKTEFDVVLTSHGDNKVAVIKALRAATGLGLKEAKGMAESAPVAVKEAISKEEAEALKADLEAAGAAVEIK</sequence>
<accession>A8GYW8</accession>
<feature type="chain" id="PRO_1000079812" description="Large ribosomal subunit protein bL12">
    <location>
        <begin position="1"/>
        <end position="121"/>
    </location>
</feature>